<feature type="chain" id="PRO_1000047496" description="Glycine--tRNA ligase alpha subunit">
    <location>
        <begin position="1"/>
        <end position="303"/>
    </location>
</feature>
<gene>
    <name evidence="1" type="primary">glyQ</name>
    <name type="ordered locus">SSON_3829</name>
</gene>
<sequence>MQKFDTRTFQGLILTLQDYWARQGCTIVQPLDMEVGAGTSHPMTCLRALGPEPMAAAYVQPSRRPTDGRYGENPNRLQHYYQFQVVIKPSPDNIQELYLGSLKELGMDPTIHDIRFVEDNWENPTLGAWGLGWEVWLNGMEVTQFTYFQQVGGLECKPVTGEITYGLERLAMYIQGVDSVYDLVWSDGPLGKTTYGDVFHQNEVEQSTYNFEYADVDFLFTCFEQYEKEAQQLLALENPLPLPAYERILKAAHSFNLLDARKAISVTERQRYILRIRTLTKAVAEAYYASREALGFPMCNKDK</sequence>
<reference key="1">
    <citation type="journal article" date="2005" name="Nucleic Acids Res.">
        <title>Genome dynamics and diversity of Shigella species, the etiologic agents of bacillary dysentery.</title>
        <authorList>
            <person name="Yang F."/>
            <person name="Yang J."/>
            <person name="Zhang X."/>
            <person name="Chen L."/>
            <person name="Jiang Y."/>
            <person name="Yan Y."/>
            <person name="Tang X."/>
            <person name="Wang J."/>
            <person name="Xiong Z."/>
            <person name="Dong J."/>
            <person name="Xue Y."/>
            <person name="Zhu Y."/>
            <person name="Xu X."/>
            <person name="Sun L."/>
            <person name="Chen S."/>
            <person name="Nie H."/>
            <person name="Peng J."/>
            <person name="Xu J."/>
            <person name="Wang Y."/>
            <person name="Yuan Z."/>
            <person name="Wen Y."/>
            <person name="Yao Z."/>
            <person name="Shen Y."/>
            <person name="Qiang B."/>
            <person name="Hou Y."/>
            <person name="Yu J."/>
            <person name="Jin Q."/>
        </authorList>
    </citation>
    <scope>NUCLEOTIDE SEQUENCE [LARGE SCALE GENOMIC DNA]</scope>
    <source>
        <strain>Ss046</strain>
    </source>
</reference>
<proteinExistence type="inferred from homology"/>
<protein>
    <recommendedName>
        <fullName evidence="1">Glycine--tRNA ligase alpha subunit</fullName>
        <ecNumber evidence="1">6.1.1.14</ecNumber>
    </recommendedName>
    <alternativeName>
        <fullName evidence="1">Glycyl-tRNA synthetase alpha subunit</fullName>
        <shortName evidence="1">GlyRS</shortName>
    </alternativeName>
</protein>
<accession>Q3YVU1</accession>
<evidence type="ECO:0000255" key="1">
    <source>
        <dbReference type="HAMAP-Rule" id="MF_00254"/>
    </source>
</evidence>
<comment type="catalytic activity">
    <reaction evidence="1">
        <text>tRNA(Gly) + glycine + ATP = glycyl-tRNA(Gly) + AMP + diphosphate</text>
        <dbReference type="Rhea" id="RHEA:16013"/>
        <dbReference type="Rhea" id="RHEA-COMP:9664"/>
        <dbReference type="Rhea" id="RHEA-COMP:9683"/>
        <dbReference type="ChEBI" id="CHEBI:30616"/>
        <dbReference type="ChEBI" id="CHEBI:33019"/>
        <dbReference type="ChEBI" id="CHEBI:57305"/>
        <dbReference type="ChEBI" id="CHEBI:78442"/>
        <dbReference type="ChEBI" id="CHEBI:78522"/>
        <dbReference type="ChEBI" id="CHEBI:456215"/>
        <dbReference type="EC" id="6.1.1.14"/>
    </reaction>
</comment>
<comment type="subunit">
    <text evidence="1">Tetramer of two alpha and two beta subunits.</text>
</comment>
<comment type="subcellular location">
    <subcellularLocation>
        <location evidence="1">Cytoplasm</location>
    </subcellularLocation>
</comment>
<comment type="similarity">
    <text evidence="1">Belongs to the class-II aminoacyl-tRNA synthetase family.</text>
</comment>
<keyword id="KW-0030">Aminoacyl-tRNA synthetase</keyword>
<keyword id="KW-0067">ATP-binding</keyword>
<keyword id="KW-0963">Cytoplasm</keyword>
<keyword id="KW-0436">Ligase</keyword>
<keyword id="KW-0547">Nucleotide-binding</keyword>
<keyword id="KW-0648">Protein biosynthesis</keyword>
<keyword id="KW-1185">Reference proteome</keyword>
<dbReference type="EC" id="6.1.1.14" evidence="1"/>
<dbReference type="EMBL" id="CP000038">
    <property type="protein sequence ID" value="AAZ90371.1"/>
    <property type="molecule type" value="Genomic_DNA"/>
</dbReference>
<dbReference type="RefSeq" id="WP_001168544.1">
    <property type="nucleotide sequence ID" value="NC_007384.1"/>
</dbReference>
<dbReference type="SMR" id="Q3YVU1"/>
<dbReference type="GeneID" id="93778290"/>
<dbReference type="KEGG" id="ssn:SSON_3829"/>
<dbReference type="HOGENOM" id="CLU_057066_1_0_6"/>
<dbReference type="Proteomes" id="UP000002529">
    <property type="component" value="Chromosome"/>
</dbReference>
<dbReference type="GO" id="GO:0005829">
    <property type="term" value="C:cytosol"/>
    <property type="evidence" value="ECO:0007669"/>
    <property type="project" value="TreeGrafter"/>
</dbReference>
<dbReference type="GO" id="GO:0005524">
    <property type="term" value="F:ATP binding"/>
    <property type="evidence" value="ECO:0007669"/>
    <property type="project" value="UniProtKB-UniRule"/>
</dbReference>
<dbReference type="GO" id="GO:0004820">
    <property type="term" value="F:glycine-tRNA ligase activity"/>
    <property type="evidence" value="ECO:0007669"/>
    <property type="project" value="UniProtKB-UniRule"/>
</dbReference>
<dbReference type="GO" id="GO:0006426">
    <property type="term" value="P:glycyl-tRNA aminoacylation"/>
    <property type="evidence" value="ECO:0007669"/>
    <property type="project" value="UniProtKB-UniRule"/>
</dbReference>
<dbReference type="CDD" id="cd00733">
    <property type="entry name" value="GlyRS_alpha_core"/>
    <property type="match status" value="1"/>
</dbReference>
<dbReference type="FunFam" id="1.20.58.180:FF:000001">
    <property type="entry name" value="Glycine--tRNA ligase alpha subunit"/>
    <property type="match status" value="1"/>
</dbReference>
<dbReference type="FunFam" id="3.30.930.10:FF:000006">
    <property type="entry name" value="Glycine--tRNA ligase alpha subunit"/>
    <property type="match status" value="1"/>
</dbReference>
<dbReference type="Gene3D" id="3.30.930.10">
    <property type="entry name" value="Bira Bifunctional Protein, Domain 2"/>
    <property type="match status" value="1"/>
</dbReference>
<dbReference type="Gene3D" id="1.20.58.180">
    <property type="entry name" value="Class II aaRS and biotin synthetases, domain 2"/>
    <property type="match status" value="1"/>
</dbReference>
<dbReference type="HAMAP" id="MF_00254">
    <property type="entry name" value="Gly_tRNA_synth_alpha"/>
    <property type="match status" value="1"/>
</dbReference>
<dbReference type="InterPro" id="IPR045864">
    <property type="entry name" value="aa-tRNA-synth_II/BPL/LPL"/>
</dbReference>
<dbReference type="InterPro" id="IPR006194">
    <property type="entry name" value="Gly-tRNA-synth_heterodimer"/>
</dbReference>
<dbReference type="InterPro" id="IPR002310">
    <property type="entry name" value="Gly-tRNA_ligase_asu"/>
</dbReference>
<dbReference type="NCBIfam" id="TIGR00388">
    <property type="entry name" value="glyQ"/>
    <property type="match status" value="1"/>
</dbReference>
<dbReference type="NCBIfam" id="NF006827">
    <property type="entry name" value="PRK09348.1"/>
    <property type="match status" value="1"/>
</dbReference>
<dbReference type="PANTHER" id="PTHR30075:SF2">
    <property type="entry name" value="GLYCINE--TRNA LIGASE, CHLOROPLASTIC_MITOCHONDRIAL 2"/>
    <property type="match status" value="1"/>
</dbReference>
<dbReference type="PANTHER" id="PTHR30075">
    <property type="entry name" value="GLYCYL-TRNA SYNTHETASE"/>
    <property type="match status" value="1"/>
</dbReference>
<dbReference type="Pfam" id="PF02091">
    <property type="entry name" value="tRNA-synt_2e"/>
    <property type="match status" value="1"/>
</dbReference>
<dbReference type="PRINTS" id="PR01044">
    <property type="entry name" value="TRNASYNTHGA"/>
</dbReference>
<dbReference type="SUPFAM" id="SSF55681">
    <property type="entry name" value="Class II aaRS and biotin synthetases"/>
    <property type="match status" value="1"/>
</dbReference>
<dbReference type="PROSITE" id="PS50861">
    <property type="entry name" value="AA_TRNA_LIGASE_II_GLYAB"/>
    <property type="match status" value="1"/>
</dbReference>
<organism>
    <name type="scientific">Shigella sonnei (strain Ss046)</name>
    <dbReference type="NCBI Taxonomy" id="300269"/>
    <lineage>
        <taxon>Bacteria</taxon>
        <taxon>Pseudomonadati</taxon>
        <taxon>Pseudomonadota</taxon>
        <taxon>Gammaproteobacteria</taxon>
        <taxon>Enterobacterales</taxon>
        <taxon>Enterobacteriaceae</taxon>
        <taxon>Shigella</taxon>
    </lineage>
</organism>
<name>SYGA_SHISS</name>